<feature type="chain" id="PRO_0000212297" description="Holliday junction resolvase RecU">
    <location>
        <begin position="1"/>
        <end position="213"/>
    </location>
</feature>
<feature type="binding site" evidence="1">
    <location>
        <position position="99"/>
    </location>
    <ligand>
        <name>Mg(2+)</name>
        <dbReference type="ChEBI" id="CHEBI:18420"/>
    </ligand>
</feature>
<feature type="binding site" evidence="1">
    <location>
        <position position="101"/>
    </location>
    <ligand>
        <name>Mg(2+)</name>
        <dbReference type="ChEBI" id="CHEBI:18420"/>
    </ligand>
</feature>
<feature type="binding site" evidence="1">
    <location>
        <position position="114"/>
    </location>
    <ligand>
        <name>Mg(2+)</name>
        <dbReference type="ChEBI" id="CHEBI:18420"/>
    </ligand>
</feature>
<feature type="binding site" evidence="1">
    <location>
        <position position="133"/>
    </location>
    <ligand>
        <name>Mg(2+)</name>
        <dbReference type="ChEBI" id="CHEBI:18420"/>
    </ligand>
</feature>
<feature type="site" description="Transition state stabilizer" evidence="1">
    <location>
        <position position="116"/>
    </location>
</feature>
<reference key="1">
    <citation type="journal article" date="2001" name="Genome Res.">
        <title>The complete genome sequence of the lactic acid bacterium Lactococcus lactis ssp. lactis IL1403.</title>
        <authorList>
            <person name="Bolotin A."/>
            <person name="Wincker P."/>
            <person name="Mauger S."/>
            <person name="Jaillon O."/>
            <person name="Malarme K."/>
            <person name="Weissenbach J."/>
            <person name="Ehrlich S.D."/>
            <person name="Sorokin A."/>
        </authorList>
    </citation>
    <scope>NUCLEOTIDE SEQUENCE [LARGE SCALE GENOMIC DNA]</scope>
    <source>
        <strain>IL1403</strain>
    </source>
</reference>
<keyword id="KW-0963">Cytoplasm</keyword>
<keyword id="KW-0227">DNA damage</keyword>
<keyword id="KW-0233">DNA recombination</keyword>
<keyword id="KW-0234">DNA repair</keyword>
<keyword id="KW-0255">Endonuclease</keyword>
<keyword id="KW-0378">Hydrolase</keyword>
<keyword id="KW-0460">Magnesium</keyword>
<keyword id="KW-0479">Metal-binding</keyword>
<keyword id="KW-0540">Nuclease</keyword>
<keyword id="KW-1185">Reference proteome</keyword>
<evidence type="ECO:0000255" key="1">
    <source>
        <dbReference type="HAMAP-Rule" id="MF_00130"/>
    </source>
</evidence>
<organism>
    <name type="scientific">Lactococcus lactis subsp. lactis (strain IL1403)</name>
    <name type="common">Streptococcus lactis</name>
    <dbReference type="NCBI Taxonomy" id="272623"/>
    <lineage>
        <taxon>Bacteria</taxon>
        <taxon>Bacillati</taxon>
        <taxon>Bacillota</taxon>
        <taxon>Bacilli</taxon>
        <taxon>Lactobacillales</taxon>
        <taxon>Streptococcaceae</taxon>
        <taxon>Lactococcus</taxon>
    </lineage>
</organism>
<comment type="function">
    <text evidence="1">Endonuclease that resolves Holliday junction intermediates in genetic recombination. Cleaves mobile four-strand junctions by introducing symmetrical nicks in paired strands. Promotes annealing of linear ssDNA with homologous dsDNA. Required for DNA repair, homologous recombination and chromosome segregation.</text>
</comment>
<comment type="catalytic activity">
    <reaction evidence="1">
        <text>Endonucleolytic cleavage at a junction such as a reciprocal single-stranded crossover between two homologous DNA duplexes (Holliday junction).</text>
        <dbReference type="EC" id="3.1.21.10"/>
    </reaction>
</comment>
<comment type="cofactor">
    <cofactor evidence="1">
        <name>Mg(2+)</name>
        <dbReference type="ChEBI" id="CHEBI:18420"/>
    </cofactor>
    <text evidence="1">Binds 1 Mg(2+) ion per subunit.</text>
</comment>
<comment type="subcellular location">
    <subcellularLocation>
        <location evidence="1">Cytoplasm</location>
    </subcellularLocation>
</comment>
<comment type="similarity">
    <text evidence="1">Belongs to the RecU family.</text>
</comment>
<name>RECU_LACLA</name>
<sequence length="213" mass="24369">MVNYPNGRSRAYSTVPKKKKSLTELSVTKKSTSKTKGMVAFGKRGMNFEAEINATNEYYLSRGLAVIHKKPTPIQIVKVDYPQRSRAKITEAYFRQASTTDYSGVYKGHYIDFEAKETQQKTVFPLKNFHEHQIVHMSNVLAQGGIAFVLLHFARLNETYLLPSSCLITFYYEKGGLKSIPLSHIRENGYKIETNHIPRIPYLEIVNKLCEVQ</sequence>
<dbReference type="EC" id="3.1.21.10" evidence="1"/>
<dbReference type="EMBL" id="AE005176">
    <property type="protein sequence ID" value="AAK04642.1"/>
    <property type="molecule type" value="Genomic_DNA"/>
</dbReference>
<dbReference type="PIR" id="H86692">
    <property type="entry name" value="H86692"/>
</dbReference>
<dbReference type="RefSeq" id="NP_266700.1">
    <property type="nucleotide sequence ID" value="NC_002662.1"/>
</dbReference>
<dbReference type="RefSeq" id="WP_003131746.1">
    <property type="nucleotide sequence ID" value="NC_002662.1"/>
</dbReference>
<dbReference type="SMR" id="Q9CI22"/>
<dbReference type="PaxDb" id="272623-L131245"/>
<dbReference type="EnsemblBacteria" id="AAK04642">
    <property type="protein sequence ID" value="AAK04642"/>
    <property type="gene ID" value="L131245"/>
</dbReference>
<dbReference type="GeneID" id="89632645"/>
<dbReference type="KEGG" id="lla:L131245"/>
<dbReference type="PATRIC" id="fig|272623.7.peg.582"/>
<dbReference type="eggNOG" id="COG3331">
    <property type="taxonomic scope" value="Bacteria"/>
</dbReference>
<dbReference type="HOGENOM" id="CLU_096340_0_0_9"/>
<dbReference type="OrthoDB" id="9783592at2"/>
<dbReference type="Proteomes" id="UP000002196">
    <property type="component" value="Chromosome"/>
</dbReference>
<dbReference type="GO" id="GO:0005737">
    <property type="term" value="C:cytoplasm"/>
    <property type="evidence" value="ECO:0007669"/>
    <property type="project" value="UniProtKB-SubCell"/>
</dbReference>
<dbReference type="GO" id="GO:0004519">
    <property type="term" value="F:endonuclease activity"/>
    <property type="evidence" value="ECO:0007669"/>
    <property type="project" value="UniProtKB-UniRule"/>
</dbReference>
<dbReference type="GO" id="GO:0000287">
    <property type="term" value="F:magnesium ion binding"/>
    <property type="evidence" value="ECO:0007669"/>
    <property type="project" value="UniProtKB-UniRule"/>
</dbReference>
<dbReference type="GO" id="GO:0003676">
    <property type="term" value="F:nucleic acid binding"/>
    <property type="evidence" value="ECO:0007669"/>
    <property type="project" value="InterPro"/>
</dbReference>
<dbReference type="GO" id="GO:0007059">
    <property type="term" value="P:chromosome segregation"/>
    <property type="evidence" value="ECO:0007669"/>
    <property type="project" value="UniProtKB-UniRule"/>
</dbReference>
<dbReference type="GO" id="GO:0006310">
    <property type="term" value="P:DNA recombination"/>
    <property type="evidence" value="ECO:0007669"/>
    <property type="project" value="UniProtKB-UniRule"/>
</dbReference>
<dbReference type="GO" id="GO:0006281">
    <property type="term" value="P:DNA repair"/>
    <property type="evidence" value="ECO:0007669"/>
    <property type="project" value="UniProtKB-UniRule"/>
</dbReference>
<dbReference type="CDD" id="cd22354">
    <property type="entry name" value="RecU-like"/>
    <property type="match status" value="1"/>
</dbReference>
<dbReference type="Gene3D" id="3.40.1350.10">
    <property type="match status" value="1"/>
</dbReference>
<dbReference type="HAMAP" id="MF_00130">
    <property type="entry name" value="RecU"/>
    <property type="match status" value="1"/>
</dbReference>
<dbReference type="InterPro" id="IPR004612">
    <property type="entry name" value="Resolv_RecU"/>
</dbReference>
<dbReference type="InterPro" id="IPR011335">
    <property type="entry name" value="Restrct_endonuc-II-like"/>
</dbReference>
<dbReference type="InterPro" id="IPR011856">
    <property type="entry name" value="tRNA_endonuc-like_dom_sf"/>
</dbReference>
<dbReference type="NCBIfam" id="NF002580">
    <property type="entry name" value="PRK02234.1-1"/>
    <property type="match status" value="1"/>
</dbReference>
<dbReference type="NCBIfam" id="NF002584">
    <property type="entry name" value="PRK02234.1-5"/>
    <property type="match status" value="1"/>
</dbReference>
<dbReference type="NCBIfam" id="TIGR00648">
    <property type="entry name" value="recU"/>
    <property type="match status" value="1"/>
</dbReference>
<dbReference type="Pfam" id="PF03838">
    <property type="entry name" value="RecU"/>
    <property type="match status" value="1"/>
</dbReference>
<dbReference type="PIRSF" id="PIRSF037785">
    <property type="entry name" value="RecU"/>
    <property type="match status" value="1"/>
</dbReference>
<dbReference type="SUPFAM" id="SSF52980">
    <property type="entry name" value="Restriction endonuclease-like"/>
    <property type="match status" value="1"/>
</dbReference>
<gene>
    <name evidence="1" type="primary">recU</name>
    <name type="synonym">yfdA</name>
    <name type="ordered locus">LL0544</name>
    <name type="ORF">L131245</name>
</gene>
<proteinExistence type="inferred from homology"/>
<protein>
    <recommendedName>
        <fullName evidence="1">Holliday junction resolvase RecU</fullName>
        <ecNumber evidence="1">3.1.21.10</ecNumber>
    </recommendedName>
    <alternativeName>
        <fullName evidence="1">Recombination protein U homolog</fullName>
    </alternativeName>
</protein>
<accession>Q9CI22</accession>